<gene>
    <name evidence="1" type="primary">cofC</name>
    <name type="ordered locus">NP_2400A</name>
</gene>
<comment type="function">
    <text evidence="1">Guanylyltransferase that catalyzes the activation of (2S)-2-phospholactate (2-PL) as (2S)-lactyl-2-diphospho-5'-guanosine, via the condensation of 2-PL with GTP. It is involved in the biosynthesis of coenzyme F420, a hydride carrier cofactor.</text>
</comment>
<comment type="catalytic activity">
    <reaction evidence="1">
        <text>(2S)-2-phospholactate + GTP + H(+) = (2S)-lactyl-2-diphospho-5'-guanosine + diphosphate</text>
        <dbReference type="Rhea" id="RHEA:63424"/>
        <dbReference type="ChEBI" id="CHEBI:15378"/>
        <dbReference type="ChEBI" id="CHEBI:33019"/>
        <dbReference type="ChEBI" id="CHEBI:37565"/>
        <dbReference type="ChEBI" id="CHEBI:59435"/>
        <dbReference type="ChEBI" id="CHEBI:59906"/>
        <dbReference type="EC" id="2.7.7.68"/>
    </reaction>
</comment>
<comment type="pathway">
    <text evidence="1">Cofactor biosynthesis; coenzyme F420 biosynthesis.</text>
</comment>
<comment type="subunit">
    <text evidence="1">Homodimer.</text>
</comment>
<comment type="similarity">
    <text evidence="1">Belongs to the CofC family.</text>
</comment>
<dbReference type="EC" id="2.7.7.68" evidence="1"/>
<dbReference type="EMBL" id="CR936257">
    <property type="protein sequence ID" value="CAI49291.1"/>
    <property type="molecule type" value="Genomic_DNA"/>
</dbReference>
<dbReference type="RefSeq" id="WP_011322917.1">
    <property type="nucleotide sequence ID" value="NC_007426.1"/>
</dbReference>
<dbReference type="SMR" id="Q3IRF2"/>
<dbReference type="STRING" id="348780.NP_2400A"/>
<dbReference type="EnsemblBacteria" id="CAI49291">
    <property type="protein sequence ID" value="CAI49291"/>
    <property type="gene ID" value="NP_2400A"/>
</dbReference>
<dbReference type="GeneID" id="3701435"/>
<dbReference type="KEGG" id="nph:NP_2400A"/>
<dbReference type="eggNOG" id="arCOG04472">
    <property type="taxonomic scope" value="Archaea"/>
</dbReference>
<dbReference type="HOGENOM" id="CLU_076569_2_0_2"/>
<dbReference type="OrthoDB" id="11179at2157"/>
<dbReference type="UniPathway" id="UPA00071"/>
<dbReference type="Proteomes" id="UP000002698">
    <property type="component" value="Chromosome"/>
</dbReference>
<dbReference type="GO" id="GO:0005525">
    <property type="term" value="F:GTP binding"/>
    <property type="evidence" value="ECO:0007669"/>
    <property type="project" value="UniProtKB-KW"/>
</dbReference>
<dbReference type="GO" id="GO:0043814">
    <property type="term" value="F:phospholactate guanylyltransferase activity"/>
    <property type="evidence" value="ECO:0007669"/>
    <property type="project" value="UniProtKB-EC"/>
</dbReference>
<dbReference type="GO" id="GO:0052645">
    <property type="term" value="P:F420-0 metabolic process"/>
    <property type="evidence" value="ECO:0007669"/>
    <property type="project" value="UniProtKB-UniRule"/>
</dbReference>
<dbReference type="Gene3D" id="6.10.140.50">
    <property type="match status" value="1"/>
</dbReference>
<dbReference type="Gene3D" id="3.90.550.10">
    <property type="entry name" value="Spore Coat Polysaccharide Biosynthesis Protein SpsA, Chain A"/>
    <property type="match status" value="1"/>
</dbReference>
<dbReference type="HAMAP" id="MF_02114">
    <property type="entry name" value="CofC"/>
    <property type="match status" value="1"/>
</dbReference>
<dbReference type="InterPro" id="IPR002835">
    <property type="entry name" value="CofC"/>
</dbReference>
<dbReference type="InterPro" id="IPR029044">
    <property type="entry name" value="Nucleotide-diphossugar_trans"/>
</dbReference>
<dbReference type="NCBIfam" id="TIGR03552">
    <property type="entry name" value="F420_cofC"/>
    <property type="match status" value="1"/>
</dbReference>
<dbReference type="PANTHER" id="PTHR40392">
    <property type="entry name" value="2-PHOSPHO-L-LACTATE GUANYLYLTRANSFERASE"/>
    <property type="match status" value="1"/>
</dbReference>
<dbReference type="PANTHER" id="PTHR40392:SF1">
    <property type="entry name" value="2-PHOSPHO-L-LACTATE GUANYLYLTRANSFERASE"/>
    <property type="match status" value="1"/>
</dbReference>
<dbReference type="Pfam" id="PF01983">
    <property type="entry name" value="CofC"/>
    <property type="match status" value="1"/>
</dbReference>
<dbReference type="SUPFAM" id="SSF53448">
    <property type="entry name" value="Nucleotide-diphospho-sugar transferases"/>
    <property type="match status" value="1"/>
</dbReference>
<evidence type="ECO:0000255" key="1">
    <source>
        <dbReference type="HAMAP-Rule" id="MF_02114"/>
    </source>
</evidence>
<feature type="chain" id="PRO_0000398762" description="2-phospho-L-lactate guanylyltransferase">
    <location>
        <begin position="1"/>
        <end position="201"/>
    </location>
</feature>
<sequence length="201" mass="21084">MDVLVPFAAREPKTRLAGTLDADERAAFARAMLLDVCDAVEAAGGEPTVLATEPLAIEQPVVVDKRPLTPAIDAHLSPPAAVVMADVALVTPAALRRLFATTGDVVIAPGLGGGTNALVVRADGFTVDYHGTSVRDHRRAAEGAGIDARSVDSFRLAVDIDEPTDLAEVLLHGDGRSADWLKNAGFRLAETDGRTTVERRG</sequence>
<name>COFC_NATPD</name>
<reference key="1">
    <citation type="journal article" date="2005" name="Genome Res.">
        <title>Living with two extremes: conclusions from the genome sequence of Natronomonas pharaonis.</title>
        <authorList>
            <person name="Falb M."/>
            <person name="Pfeiffer F."/>
            <person name="Palm P."/>
            <person name="Rodewald K."/>
            <person name="Hickmann V."/>
            <person name="Tittor J."/>
            <person name="Oesterhelt D."/>
        </authorList>
    </citation>
    <scope>NUCLEOTIDE SEQUENCE [LARGE SCALE GENOMIC DNA]</scope>
    <source>
        <strain>ATCC 35678 / DSM 2160 / CIP 103997 / JCM 8858 / NBRC 14720 / NCIMB 2260 / Gabara</strain>
    </source>
</reference>
<organism>
    <name type="scientific">Natronomonas pharaonis (strain ATCC 35678 / DSM 2160 / CIP 103997 / JCM 8858 / NBRC 14720 / NCIMB 2260 / Gabara)</name>
    <name type="common">Halobacterium pharaonis</name>
    <dbReference type="NCBI Taxonomy" id="348780"/>
    <lineage>
        <taxon>Archaea</taxon>
        <taxon>Methanobacteriati</taxon>
        <taxon>Methanobacteriota</taxon>
        <taxon>Stenosarchaea group</taxon>
        <taxon>Halobacteria</taxon>
        <taxon>Halobacteriales</taxon>
        <taxon>Haloarculaceae</taxon>
        <taxon>Natronomonas</taxon>
    </lineage>
</organism>
<keyword id="KW-0342">GTP-binding</keyword>
<keyword id="KW-0547">Nucleotide-binding</keyword>
<keyword id="KW-0548">Nucleotidyltransferase</keyword>
<keyword id="KW-1185">Reference proteome</keyword>
<keyword id="KW-0808">Transferase</keyword>
<protein>
    <recommendedName>
        <fullName evidence="1">2-phospho-L-lactate guanylyltransferase</fullName>
        <shortName evidence="1">LP guanylyltransferase</shortName>
        <ecNumber evidence="1">2.7.7.68</ecNumber>
    </recommendedName>
</protein>
<proteinExistence type="inferred from homology"/>
<accession>Q3IRF2</accession>